<feature type="chain" id="PRO_0000384182" description="Mitochondrial distribution and morphology protein 10">
    <location>
        <begin position="1"/>
        <end position="458"/>
    </location>
</feature>
<feature type="region of interest" description="Disordered" evidence="2">
    <location>
        <begin position="307"/>
        <end position="339"/>
    </location>
</feature>
<feature type="compositionally biased region" description="Basic and acidic residues" evidence="2">
    <location>
        <begin position="326"/>
        <end position="339"/>
    </location>
</feature>
<evidence type="ECO:0000255" key="1">
    <source>
        <dbReference type="HAMAP-Rule" id="MF_03102"/>
    </source>
</evidence>
<evidence type="ECO:0000256" key="2">
    <source>
        <dbReference type="SAM" id="MobiDB-lite"/>
    </source>
</evidence>
<protein>
    <recommendedName>
        <fullName evidence="1">Mitochondrial distribution and morphology protein 10</fullName>
    </recommendedName>
    <alternativeName>
        <fullName evidence="1">Mitochondrial inheritance component MDM10</fullName>
    </alternativeName>
</protein>
<organism>
    <name type="scientific">Lachancea thermotolerans (strain ATCC 56472 / CBS 6340 / NRRL Y-8284)</name>
    <name type="common">Yeast</name>
    <name type="synonym">Kluyveromyces thermotolerans</name>
    <dbReference type="NCBI Taxonomy" id="559295"/>
    <lineage>
        <taxon>Eukaryota</taxon>
        <taxon>Fungi</taxon>
        <taxon>Dikarya</taxon>
        <taxon>Ascomycota</taxon>
        <taxon>Saccharomycotina</taxon>
        <taxon>Saccharomycetes</taxon>
        <taxon>Saccharomycetales</taxon>
        <taxon>Saccharomycetaceae</taxon>
        <taxon>Lachancea</taxon>
    </lineage>
</organism>
<sequence>MIDYMEHVLRSFEQCTGWNRDNSYENVTATSENLLSFRVPSGVKFQVSNKSTPNTFTTFELSNNKVINGSLAYLYTNCQGLENYVSNSRDILLQEASETYRQIRPLYPCHSLRSSSDGAKEFGPSSLWYGRMYYPTSTLEAMVVSRSSAQTQFVAKCISSLANASVLTLYWQKDSGQNCQEWVASTNEGLLGYRILHNFVGSQSKLNTSLYNDSSLSVGGELWFGVLNTTPACSTTLRYCTHSANTGKPLTLTLSWNPLFGHVSSTYSVKTSSGATFSSKYDFNLYSIESNLSFGCDLWRRGHTKQLDQRRTEPLDAPNTNSSVFSKERVQKKQGPKEDSPMFYHLMAGSTSSQKLIEDLNVTFASSLQKLTKEKSTIQRFENSLIDANFASVWKLSTSLRHKNLRVLWEGKYKGFLISAGAEFTGAPLELPSNLAGESKTPALIRPGKFGIQLQYST</sequence>
<comment type="function">
    <text evidence="1">Component of the ERMES/MDM complex, which serves as a molecular tether to connect the endoplasmic reticulum and mitochondria. Components of this complex are involved in the control of mitochondrial shape and protein biogenesis and may function in phospholipid exchange. MDM10 is involved in the late assembly steps of the general translocase of the mitochondrial outer membrane (TOM complex). Functions in the TOM40-specific route of the assembly of outer membrane beta-barrel proteins, including the association of TOM40 with the receptor TOM22 and small TOM proteins. Can associate with the SAM(core) complex as well as the MDM12-MMM1 complex, both involved in late steps of the major beta-barrel assembly pathway, that is responsible for biogenesis of all outer membrane beta-barrel proteins. May act as a switch that shuttles between both complexes and channels precursor proteins into the TOM40-specific pathway. Plays a role in mitochondrial morphology and in the inheritance of mitochondria.</text>
</comment>
<comment type="subunit">
    <text evidence="1">Component of the ER-mitochondria encounter structure (ERMES) or MDM complex, composed of MMM1, MDM10, MDM12 and MDM34. Associates with the mitochondrial outer membrane sorting assembly machinery SAM(core) complex.</text>
</comment>
<comment type="subcellular location">
    <subcellularLocation>
        <location evidence="1">Mitochondrion outer membrane</location>
        <topology evidence="1">Multi-pass membrane protein</topology>
    </subcellularLocation>
    <text evidence="1">The ERMES/MDM complex localizes to a few discrete foci (around 10 per single cell), that represent mitochondria-endoplasmic reticulum junctions. These foci are often found next to mtDNA nucleoids.</text>
</comment>
<comment type="domain">
    <text>Lacks alpha-helical transmembrane segments, suggesting that it resides in the membrane via beta-sheet conformations similar to those predicted for other outer membrane proteins and porin.</text>
</comment>
<comment type="similarity">
    <text evidence="1">Belongs to the MDM10 family.</text>
</comment>
<dbReference type="EMBL" id="CU928168">
    <property type="protein sequence ID" value="CAR22412.1"/>
    <property type="molecule type" value="Genomic_DNA"/>
</dbReference>
<dbReference type="RefSeq" id="XP_002552850.1">
    <property type="nucleotide sequence ID" value="XM_002552804.1"/>
</dbReference>
<dbReference type="SMR" id="C5DG70"/>
<dbReference type="FunCoup" id="C5DG70">
    <property type="interactions" value="85"/>
</dbReference>
<dbReference type="STRING" id="559295.C5DG70"/>
<dbReference type="GeneID" id="8295070"/>
<dbReference type="KEGG" id="lth:KLTH0D02860g"/>
<dbReference type="eggNOG" id="ENOG502QUN5">
    <property type="taxonomic scope" value="Eukaryota"/>
</dbReference>
<dbReference type="HOGENOM" id="CLU_026505_0_0_1"/>
<dbReference type="InParanoid" id="C5DG70"/>
<dbReference type="OMA" id="VPGYRQI"/>
<dbReference type="OrthoDB" id="2103793at2759"/>
<dbReference type="Proteomes" id="UP000002036">
    <property type="component" value="Chromosome D"/>
</dbReference>
<dbReference type="GO" id="GO:0032865">
    <property type="term" value="C:ERMES complex"/>
    <property type="evidence" value="ECO:0007669"/>
    <property type="project" value="UniProtKB-UniRule"/>
</dbReference>
<dbReference type="GO" id="GO:0001401">
    <property type="term" value="C:SAM complex"/>
    <property type="evidence" value="ECO:0007669"/>
    <property type="project" value="TreeGrafter"/>
</dbReference>
<dbReference type="GO" id="GO:0051654">
    <property type="term" value="P:establishment of mitochondrion localization"/>
    <property type="evidence" value="ECO:0007669"/>
    <property type="project" value="TreeGrafter"/>
</dbReference>
<dbReference type="GO" id="GO:0000002">
    <property type="term" value="P:mitochondrial genome maintenance"/>
    <property type="evidence" value="ECO:0007669"/>
    <property type="project" value="UniProtKB-UniRule"/>
</dbReference>
<dbReference type="GO" id="GO:0070096">
    <property type="term" value="P:mitochondrial outer membrane translocase complex assembly"/>
    <property type="evidence" value="ECO:0007669"/>
    <property type="project" value="UniProtKB-UniRule"/>
</dbReference>
<dbReference type="GO" id="GO:1990456">
    <property type="term" value="P:mitochondrion-endoplasmic reticulum membrane tethering"/>
    <property type="evidence" value="ECO:0007669"/>
    <property type="project" value="UniProtKB-UniRule"/>
</dbReference>
<dbReference type="GO" id="GO:0015914">
    <property type="term" value="P:phospholipid transport"/>
    <property type="evidence" value="ECO:0007669"/>
    <property type="project" value="TreeGrafter"/>
</dbReference>
<dbReference type="GO" id="GO:0045040">
    <property type="term" value="P:protein insertion into mitochondrial outer membrane"/>
    <property type="evidence" value="ECO:0007669"/>
    <property type="project" value="UniProtKB-UniRule"/>
</dbReference>
<dbReference type="HAMAP" id="MF_03102">
    <property type="entry name" value="Mdm10"/>
    <property type="match status" value="1"/>
</dbReference>
<dbReference type="InterPro" id="IPR027539">
    <property type="entry name" value="Mdm10"/>
</dbReference>
<dbReference type="PANTHER" id="PTHR28035">
    <property type="entry name" value="MITOCHONDRIAL DISTRIBUTION AND MORPHOLOGY PROTEIN 10"/>
    <property type="match status" value="1"/>
</dbReference>
<dbReference type="PANTHER" id="PTHR28035:SF1">
    <property type="entry name" value="MITOCHONDRIAL DISTRIBUTION AND MORPHOLOGY PROTEIN 10"/>
    <property type="match status" value="1"/>
</dbReference>
<dbReference type="Pfam" id="PF12519">
    <property type="entry name" value="MDM10"/>
    <property type="match status" value="1"/>
</dbReference>
<name>MDM10_LACTC</name>
<keyword id="KW-0472">Membrane</keyword>
<keyword id="KW-0496">Mitochondrion</keyword>
<keyword id="KW-1000">Mitochondrion outer membrane</keyword>
<keyword id="KW-1185">Reference proteome</keyword>
<keyword id="KW-0812">Transmembrane</keyword>
<keyword id="KW-1134">Transmembrane beta strand</keyword>
<gene>
    <name evidence="1" type="primary">MDM10</name>
    <name type="ordered locus">KLTH0D02860g</name>
</gene>
<reference key="1">
    <citation type="journal article" date="2009" name="Genome Res.">
        <title>Comparative genomics of protoploid Saccharomycetaceae.</title>
        <authorList>
            <consortium name="The Genolevures Consortium"/>
            <person name="Souciet J.-L."/>
            <person name="Dujon B."/>
            <person name="Gaillardin C."/>
            <person name="Johnston M."/>
            <person name="Baret P.V."/>
            <person name="Cliften P."/>
            <person name="Sherman D.J."/>
            <person name="Weissenbach J."/>
            <person name="Westhof E."/>
            <person name="Wincker P."/>
            <person name="Jubin C."/>
            <person name="Poulain J."/>
            <person name="Barbe V."/>
            <person name="Segurens B."/>
            <person name="Artiguenave F."/>
            <person name="Anthouard V."/>
            <person name="Vacherie B."/>
            <person name="Val M.-E."/>
            <person name="Fulton R.S."/>
            <person name="Minx P."/>
            <person name="Wilson R."/>
            <person name="Durrens P."/>
            <person name="Jean G."/>
            <person name="Marck C."/>
            <person name="Martin T."/>
            <person name="Nikolski M."/>
            <person name="Rolland T."/>
            <person name="Seret M.-L."/>
            <person name="Casaregola S."/>
            <person name="Despons L."/>
            <person name="Fairhead C."/>
            <person name="Fischer G."/>
            <person name="Lafontaine I."/>
            <person name="Leh V."/>
            <person name="Lemaire M."/>
            <person name="de Montigny J."/>
            <person name="Neuveglise C."/>
            <person name="Thierry A."/>
            <person name="Blanc-Lenfle I."/>
            <person name="Bleykasten C."/>
            <person name="Diffels J."/>
            <person name="Fritsch E."/>
            <person name="Frangeul L."/>
            <person name="Goeffon A."/>
            <person name="Jauniaux N."/>
            <person name="Kachouri-Lafond R."/>
            <person name="Payen C."/>
            <person name="Potier S."/>
            <person name="Pribylova L."/>
            <person name="Ozanne C."/>
            <person name="Richard G.-F."/>
            <person name="Sacerdot C."/>
            <person name="Straub M.-L."/>
            <person name="Talla E."/>
        </authorList>
    </citation>
    <scope>NUCLEOTIDE SEQUENCE [LARGE SCALE GENOMIC DNA]</scope>
    <source>
        <strain>ATCC 56472 / CBS 6340 / NRRL Y-8284</strain>
    </source>
</reference>
<accession>C5DG70</accession>
<proteinExistence type="inferred from homology"/>